<proteinExistence type="predicted"/>
<reference key="1">
    <citation type="journal article" date="1990" name="Mol. Gen. Genet.">
        <title>The pet genes of Rhodospirillum rubrum: cloning and sequencing of the genes for the cytochrome bc1-complex.</title>
        <authorList>
            <person name="Majewski C."/>
            <person name="Trebst A."/>
        </authorList>
    </citation>
    <scope>NUCLEOTIDE SEQUENCE [GENOMIC DNA]</scope>
    <source>
        <strain>FR1</strain>
    </source>
</reference>
<dbReference type="EMBL" id="X55387">
    <property type="protein sequence ID" value="CAA39057.1"/>
    <property type="molecule type" value="Genomic_DNA"/>
</dbReference>
<dbReference type="PIR" id="S12255">
    <property type="entry name" value="S12255"/>
</dbReference>
<feature type="chain" id="PRO_0000066391" description="Uncharacterized 28 kDa protein in petA 5'region">
    <location>
        <begin position="1"/>
        <end position="255"/>
    </location>
</feature>
<feature type="region of interest" description="Disordered" evidence="1">
    <location>
        <begin position="112"/>
        <end position="145"/>
    </location>
</feature>
<feature type="region of interest" description="Disordered" evidence="1">
    <location>
        <begin position="157"/>
        <end position="183"/>
    </location>
</feature>
<protein>
    <recommendedName>
        <fullName>Uncharacterized 28 kDa protein in petA 5'region</fullName>
    </recommendedName>
</protein>
<evidence type="ECO:0000256" key="1">
    <source>
        <dbReference type="SAM" id="MobiDB-lite"/>
    </source>
</evidence>
<name>YPE1_RHORU</name>
<sequence>MLDAPAGRWPDPDAGEGALRRLLDGEGKDLVIDRALLRWAAERGKGPYPRAERTARWRALIETALGWTAPTFPLGGRDALACGLKGPAVGEAWRPCADAGLRAAARPGGTRCWPGSPLGGTGPPTNRPPRSRAWNRYRSDRPSPGGVLRPACGMAQGLAEHQGGGDGDVERAHAGNHRNPDAQVGALVDLGGNARALSAQQQHVVGLKVSFGMKRARLRCQQDQAGFVGEPRDEIRPGRMTHKSGAFEIVHSGAA</sequence>
<accession>P23138</accession>
<organism>
    <name type="scientific">Rhodospirillum rubrum</name>
    <dbReference type="NCBI Taxonomy" id="1085"/>
    <lineage>
        <taxon>Bacteria</taxon>
        <taxon>Pseudomonadati</taxon>
        <taxon>Pseudomonadota</taxon>
        <taxon>Alphaproteobacteria</taxon>
        <taxon>Rhodospirillales</taxon>
        <taxon>Rhodospirillaceae</taxon>
        <taxon>Rhodospirillum</taxon>
    </lineage>
</organism>